<reference key="1">
    <citation type="journal article" date="1997" name="Nature">
        <title>The complete genome sequence of the Gram-positive bacterium Bacillus subtilis.</title>
        <authorList>
            <person name="Kunst F."/>
            <person name="Ogasawara N."/>
            <person name="Moszer I."/>
            <person name="Albertini A.M."/>
            <person name="Alloni G."/>
            <person name="Azevedo V."/>
            <person name="Bertero M.G."/>
            <person name="Bessieres P."/>
            <person name="Bolotin A."/>
            <person name="Borchert S."/>
            <person name="Borriss R."/>
            <person name="Boursier L."/>
            <person name="Brans A."/>
            <person name="Braun M."/>
            <person name="Brignell S.C."/>
            <person name="Bron S."/>
            <person name="Brouillet S."/>
            <person name="Bruschi C.V."/>
            <person name="Caldwell B."/>
            <person name="Capuano V."/>
            <person name="Carter N.M."/>
            <person name="Choi S.-K."/>
            <person name="Codani J.-J."/>
            <person name="Connerton I.F."/>
            <person name="Cummings N.J."/>
            <person name="Daniel R.A."/>
            <person name="Denizot F."/>
            <person name="Devine K.M."/>
            <person name="Duesterhoeft A."/>
            <person name="Ehrlich S.D."/>
            <person name="Emmerson P.T."/>
            <person name="Entian K.-D."/>
            <person name="Errington J."/>
            <person name="Fabret C."/>
            <person name="Ferrari E."/>
            <person name="Foulger D."/>
            <person name="Fritz C."/>
            <person name="Fujita M."/>
            <person name="Fujita Y."/>
            <person name="Fuma S."/>
            <person name="Galizzi A."/>
            <person name="Galleron N."/>
            <person name="Ghim S.-Y."/>
            <person name="Glaser P."/>
            <person name="Goffeau A."/>
            <person name="Golightly E.J."/>
            <person name="Grandi G."/>
            <person name="Guiseppi G."/>
            <person name="Guy B.J."/>
            <person name="Haga K."/>
            <person name="Haiech J."/>
            <person name="Harwood C.R."/>
            <person name="Henaut A."/>
            <person name="Hilbert H."/>
            <person name="Holsappel S."/>
            <person name="Hosono S."/>
            <person name="Hullo M.-F."/>
            <person name="Itaya M."/>
            <person name="Jones L.-M."/>
            <person name="Joris B."/>
            <person name="Karamata D."/>
            <person name="Kasahara Y."/>
            <person name="Klaerr-Blanchard M."/>
            <person name="Klein C."/>
            <person name="Kobayashi Y."/>
            <person name="Koetter P."/>
            <person name="Koningstein G."/>
            <person name="Krogh S."/>
            <person name="Kumano M."/>
            <person name="Kurita K."/>
            <person name="Lapidus A."/>
            <person name="Lardinois S."/>
            <person name="Lauber J."/>
            <person name="Lazarevic V."/>
            <person name="Lee S.-M."/>
            <person name="Levine A."/>
            <person name="Liu H."/>
            <person name="Masuda S."/>
            <person name="Mauel C."/>
            <person name="Medigue C."/>
            <person name="Medina N."/>
            <person name="Mellado R.P."/>
            <person name="Mizuno M."/>
            <person name="Moestl D."/>
            <person name="Nakai S."/>
            <person name="Noback M."/>
            <person name="Noone D."/>
            <person name="O'Reilly M."/>
            <person name="Ogawa K."/>
            <person name="Ogiwara A."/>
            <person name="Oudega B."/>
            <person name="Park S.-H."/>
            <person name="Parro V."/>
            <person name="Pohl T.M."/>
            <person name="Portetelle D."/>
            <person name="Porwollik S."/>
            <person name="Prescott A.M."/>
            <person name="Presecan E."/>
            <person name="Pujic P."/>
            <person name="Purnelle B."/>
            <person name="Rapoport G."/>
            <person name="Rey M."/>
            <person name="Reynolds S."/>
            <person name="Rieger M."/>
            <person name="Rivolta C."/>
            <person name="Rocha E."/>
            <person name="Roche B."/>
            <person name="Rose M."/>
            <person name="Sadaie Y."/>
            <person name="Sato T."/>
            <person name="Scanlan E."/>
            <person name="Schleich S."/>
            <person name="Schroeter R."/>
            <person name="Scoffone F."/>
            <person name="Sekiguchi J."/>
            <person name="Sekowska A."/>
            <person name="Seror S.J."/>
            <person name="Serror P."/>
            <person name="Shin B.-S."/>
            <person name="Soldo B."/>
            <person name="Sorokin A."/>
            <person name="Tacconi E."/>
            <person name="Takagi T."/>
            <person name="Takahashi H."/>
            <person name="Takemaru K."/>
            <person name="Takeuchi M."/>
            <person name="Tamakoshi A."/>
            <person name="Tanaka T."/>
            <person name="Terpstra P."/>
            <person name="Tognoni A."/>
            <person name="Tosato V."/>
            <person name="Uchiyama S."/>
            <person name="Vandenbol M."/>
            <person name="Vannier F."/>
            <person name="Vassarotti A."/>
            <person name="Viari A."/>
            <person name="Wambutt R."/>
            <person name="Wedler E."/>
            <person name="Wedler H."/>
            <person name="Weitzenegger T."/>
            <person name="Winters P."/>
            <person name="Wipat A."/>
            <person name="Yamamoto H."/>
            <person name="Yamane K."/>
            <person name="Yasumoto K."/>
            <person name="Yata K."/>
            <person name="Yoshida K."/>
            <person name="Yoshikawa H.-F."/>
            <person name="Zumstein E."/>
            <person name="Yoshikawa H."/>
            <person name="Danchin A."/>
        </authorList>
    </citation>
    <scope>NUCLEOTIDE SEQUENCE [LARGE SCALE GENOMIC DNA]</scope>
    <source>
        <strain>168</strain>
    </source>
</reference>
<dbReference type="EMBL" id="AL009126">
    <property type="protein sequence ID" value="CAB13475.1"/>
    <property type="molecule type" value="Genomic_DNA"/>
</dbReference>
<dbReference type="PIR" id="E69880">
    <property type="entry name" value="E69880"/>
</dbReference>
<dbReference type="RefSeq" id="NP_389484.1">
    <property type="nucleotide sequence ID" value="NC_000964.3"/>
</dbReference>
<dbReference type="RefSeq" id="WP_003232013.1">
    <property type="nucleotide sequence ID" value="NZ_OZ025638.1"/>
</dbReference>
<dbReference type="SMR" id="O31740"/>
<dbReference type="FunCoup" id="O31740">
    <property type="interactions" value="455"/>
</dbReference>
<dbReference type="IntAct" id="O31740">
    <property type="interactions" value="2"/>
</dbReference>
<dbReference type="STRING" id="224308.BSU16020"/>
<dbReference type="PaxDb" id="224308-BSU16020"/>
<dbReference type="EnsemblBacteria" id="CAB13475">
    <property type="protein sequence ID" value="CAB13475"/>
    <property type="gene ID" value="BSU_16020"/>
</dbReference>
<dbReference type="GeneID" id="935999"/>
<dbReference type="KEGG" id="bsu:BSU16020"/>
<dbReference type="PATRIC" id="fig|224308.179.peg.1742"/>
<dbReference type="eggNOG" id="COG0806">
    <property type="taxonomic scope" value="Bacteria"/>
</dbReference>
<dbReference type="InParanoid" id="O31740"/>
<dbReference type="OrthoDB" id="9810331at2"/>
<dbReference type="PhylomeDB" id="O31740"/>
<dbReference type="BioCyc" id="BSUB:BSU16020-MONOMER"/>
<dbReference type="Proteomes" id="UP000001570">
    <property type="component" value="Chromosome"/>
</dbReference>
<dbReference type="GO" id="GO:0005829">
    <property type="term" value="C:cytosol"/>
    <property type="evidence" value="ECO:0000318"/>
    <property type="project" value="GO_Central"/>
</dbReference>
<dbReference type="GO" id="GO:0005840">
    <property type="term" value="C:ribosome"/>
    <property type="evidence" value="ECO:0007669"/>
    <property type="project" value="InterPro"/>
</dbReference>
<dbReference type="GO" id="GO:0043022">
    <property type="term" value="F:ribosome binding"/>
    <property type="evidence" value="ECO:0007669"/>
    <property type="project" value="InterPro"/>
</dbReference>
<dbReference type="GO" id="GO:0030490">
    <property type="term" value="P:maturation of SSU-rRNA"/>
    <property type="evidence" value="ECO:0000318"/>
    <property type="project" value="GO_Central"/>
</dbReference>
<dbReference type="Gene3D" id="2.30.30.240">
    <property type="entry name" value="PRC-barrel domain"/>
    <property type="match status" value="1"/>
</dbReference>
<dbReference type="Gene3D" id="2.40.30.60">
    <property type="entry name" value="RimM"/>
    <property type="match status" value="1"/>
</dbReference>
<dbReference type="HAMAP" id="MF_00014">
    <property type="entry name" value="Ribosome_mat_RimM"/>
    <property type="match status" value="1"/>
</dbReference>
<dbReference type="InterPro" id="IPR027275">
    <property type="entry name" value="PRC-brl_dom"/>
</dbReference>
<dbReference type="InterPro" id="IPR011033">
    <property type="entry name" value="PRC_barrel-like_sf"/>
</dbReference>
<dbReference type="InterPro" id="IPR011961">
    <property type="entry name" value="RimM"/>
</dbReference>
<dbReference type="InterPro" id="IPR002676">
    <property type="entry name" value="RimM_N"/>
</dbReference>
<dbReference type="InterPro" id="IPR036976">
    <property type="entry name" value="RimM_N_sf"/>
</dbReference>
<dbReference type="InterPro" id="IPR009000">
    <property type="entry name" value="Transl_B-barrel_sf"/>
</dbReference>
<dbReference type="NCBIfam" id="TIGR02273">
    <property type="entry name" value="16S_RimM"/>
    <property type="match status" value="1"/>
</dbReference>
<dbReference type="PANTHER" id="PTHR33692">
    <property type="entry name" value="RIBOSOME MATURATION FACTOR RIMM"/>
    <property type="match status" value="1"/>
</dbReference>
<dbReference type="PANTHER" id="PTHR33692:SF1">
    <property type="entry name" value="RIBOSOME MATURATION FACTOR RIMM"/>
    <property type="match status" value="1"/>
</dbReference>
<dbReference type="Pfam" id="PF05239">
    <property type="entry name" value="PRC"/>
    <property type="match status" value="1"/>
</dbReference>
<dbReference type="Pfam" id="PF01782">
    <property type="entry name" value="RimM"/>
    <property type="match status" value="1"/>
</dbReference>
<dbReference type="SUPFAM" id="SSF50346">
    <property type="entry name" value="PRC-barrel domain"/>
    <property type="match status" value="1"/>
</dbReference>
<dbReference type="SUPFAM" id="SSF50447">
    <property type="entry name" value="Translation proteins"/>
    <property type="match status" value="1"/>
</dbReference>
<gene>
    <name evidence="1" type="primary">rimM</name>
    <name type="synonym">ylqE</name>
    <name type="ordered locus">BSU16020</name>
</gene>
<keyword id="KW-0143">Chaperone</keyword>
<keyword id="KW-0963">Cytoplasm</keyword>
<keyword id="KW-1185">Reference proteome</keyword>
<keyword id="KW-0690">Ribosome biogenesis</keyword>
<keyword id="KW-0698">rRNA processing</keyword>
<feature type="chain" id="PRO_0000163252" description="Ribosome maturation factor RimM">
    <location>
        <begin position="1"/>
        <end position="174"/>
    </location>
</feature>
<feature type="domain" description="PRC barrel" evidence="1">
    <location>
        <begin position="98"/>
        <end position="171"/>
    </location>
</feature>
<accession>O31740</accession>
<evidence type="ECO:0000255" key="1">
    <source>
        <dbReference type="HAMAP-Rule" id="MF_00014"/>
    </source>
</evidence>
<sequence>MTKRWFNVGKIVNTHGIKGEVRVISKTDFAEERYKPGNTLYLFMDGRNEPVEVTVNTHRLHKQFHLLQFKERQNLNEVEELKNAIIKVPEEELGELNEGEFYFHEIIGCEVFTEEGELIGKVKEILTPGANDVWVIGRKGKKDALIPYIESVVKHIDVREKKIEIELMEGLIDE</sequence>
<comment type="function">
    <text evidence="1">An accessory protein needed during the final step in the assembly of 30S ribosomal subunit, possibly for assembly of the head region. Essential for efficient processing of 16S rRNA. May be needed both before and after RbfA during the maturation of 16S rRNA. It has affinity for free ribosomal 30S subunits but not for 70S ribosomes.</text>
</comment>
<comment type="subunit">
    <text evidence="1">Binds ribosomal protein uS19.</text>
</comment>
<comment type="subcellular location">
    <subcellularLocation>
        <location evidence="1">Cytoplasm</location>
    </subcellularLocation>
</comment>
<comment type="domain">
    <text evidence="1">The PRC barrel domain binds ribosomal protein uS19.</text>
</comment>
<comment type="similarity">
    <text evidence="1">Belongs to the RimM family.</text>
</comment>
<organism>
    <name type="scientific">Bacillus subtilis (strain 168)</name>
    <dbReference type="NCBI Taxonomy" id="224308"/>
    <lineage>
        <taxon>Bacteria</taxon>
        <taxon>Bacillati</taxon>
        <taxon>Bacillota</taxon>
        <taxon>Bacilli</taxon>
        <taxon>Bacillales</taxon>
        <taxon>Bacillaceae</taxon>
        <taxon>Bacillus</taxon>
    </lineage>
</organism>
<proteinExistence type="inferred from homology"/>
<name>RIMM_BACSU</name>
<protein>
    <recommendedName>
        <fullName evidence="1">Ribosome maturation factor RimM</fullName>
    </recommendedName>
</protein>